<organism>
    <name type="scientific">Escherichia phage T7</name>
    <name type="common">Bacteriophage T7</name>
    <dbReference type="NCBI Taxonomy" id="10760"/>
    <lineage>
        <taxon>Viruses</taxon>
        <taxon>Duplodnaviria</taxon>
        <taxon>Heunggongvirae</taxon>
        <taxon>Uroviricota</taxon>
        <taxon>Caudoviricetes</taxon>
        <taxon>Autographiviridae</taxon>
        <taxon>Studiervirinae</taxon>
        <taxon>Teseptimavirus</taxon>
        <taxon>Teseptimavirus T7</taxon>
    </lineage>
</organism>
<comment type="function">
    <text evidence="1 3 7 9 12 13 14">Single-stranded DNA-binding protein that participates in viral DNA replication, formation of concatemers, recombination and repair of double-stranded breaks (PubMed:11222583, PubMed:16807232, PubMed:8617248, PubMed:9079662). Coats the lagging-strand ssDNA as the replication fork advances and stimulates the activities of viral DNA polymerase and primase/helicase (PubMed:8617248). Coordinates simultaneous synthesis of leading- and lagging-strands (PubMed:9651583). Together with DNA primase/helicase, promotes pairing of two homologous DNA molecules containing complementary single-stranded regions and mediates homologous DNA strand exchange (PubMed:8617248). Also promotes the formation of joint molecules (PubMed:8617248, PubMed:9079662). Disrupts loops, hairpins and other secondary structures present on ssDNA to reduce and eliminate pausing of viral DNA polymerase at specific sites during elongation (PubMed:1634538).</text>
</comment>
<comment type="subunit">
    <text evidence="1 4 5 6 7 8 10 11">Homodimer (PubMed:11481454, PubMed:1634538). Interacts (via C-terminus) with the viral DNA polymerase (PubMed:12766155, PubMed:15795374, PubMed:1634539, PubMed:8106511). Interacts with the viral helicase/primase (PubMed:1634539). Part of the replicase complex that includes the DNA polymerase, host thioredoxin, the primase/helicase and the single-stranded DNA binding protein (PubMed:22977246).</text>
</comment>
<comment type="domain">
    <text evidence="1 5 9 11">The acidic C-terminus is involved in modulating the ssDNA binding properties (PubMed:12766155, PubMed:16807232, PubMed:8106511). It is also required for dimer formation and for interactions with the viral DNA polymerase and the helicase (PubMed:12766155, PubMed:16807232, PubMed:8106511).</text>
</comment>
<comment type="similarity">
    <text evidence="1">Belongs to the Teseptimavirus single-stranded DNA-binding protein family.</text>
</comment>
<protein>
    <recommendedName>
        <fullName evidence="1">Single-stranded DNA-binding protein</fullName>
        <shortName evidence="1">SSB protein</shortName>
    </recommendedName>
    <alternativeName>
        <fullName evidence="1">2.5 protein</fullName>
    </alternativeName>
    <alternativeName>
        <fullName evidence="1">Gene product 2.5</fullName>
        <shortName evidence="1">gp2.5</shortName>
    </alternativeName>
</protein>
<organismHost>
    <name type="scientific">Escherichia coli</name>
    <dbReference type="NCBI Taxonomy" id="562"/>
</organismHost>
<evidence type="ECO:0000255" key="1">
    <source>
        <dbReference type="HAMAP-Rule" id="MF_04153"/>
    </source>
</evidence>
<evidence type="ECO:0000256" key="2">
    <source>
        <dbReference type="SAM" id="MobiDB-lite"/>
    </source>
</evidence>
<evidence type="ECO:0000269" key="3">
    <source>
    </source>
</evidence>
<evidence type="ECO:0000269" key="4">
    <source>
    </source>
</evidence>
<evidence type="ECO:0000269" key="5">
    <source>
    </source>
</evidence>
<evidence type="ECO:0000269" key="6">
    <source>
    </source>
</evidence>
<evidence type="ECO:0000269" key="7">
    <source>
    </source>
</evidence>
<evidence type="ECO:0000269" key="8">
    <source>
    </source>
</evidence>
<evidence type="ECO:0000269" key="9">
    <source>
    </source>
</evidence>
<evidence type="ECO:0000269" key="10">
    <source>
    </source>
</evidence>
<evidence type="ECO:0000269" key="11">
    <source>
    </source>
</evidence>
<evidence type="ECO:0000269" key="12">
    <source>
    </source>
</evidence>
<evidence type="ECO:0000269" key="13">
    <source>
    </source>
</evidence>
<evidence type="ECO:0000269" key="14">
    <source>
    </source>
</evidence>
<evidence type="ECO:0007829" key="15">
    <source>
        <dbReference type="PDB" id="1JE5"/>
    </source>
</evidence>
<dbReference type="EMBL" id="V01146">
    <property type="protein sequence ID" value="CAA24400.1"/>
    <property type="molecule type" value="Genomic_DNA"/>
</dbReference>
<dbReference type="EMBL" id="V01127">
    <property type="protein sequence ID" value="CAA24343.1"/>
    <property type="molecule type" value="Genomic_DNA"/>
</dbReference>
<dbReference type="PIR" id="F94615">
    <property type="entry name" value="DDBPT7"/>
</dbReference>
<dbReference type="RefSeq" id="NP_041970.1">
    <property type="nucleotide sequence ID" value="NC_001604.1"/>
</dbReference>
<dbReference type="PDB" id="1JE5">
    <property type="method" value="X-ray"/>
    <property type="resolution" value="1.90 A"/>
    <property type="chains" value="A/B=1-206"/>
</dbReference>
<dbReference type="PDBsum" id="1JE5"/>
<dbReference type="SMR" id="P03696"/>
<dbReference type="IntAct" id="P03696">
    <property type="interactions" value="1"/>
</dbReference>
<dbReference type="MINT" id="P03696"/>
<dbReference type="KEGG" id="vg:1261080"/>
<dbReference type="OrthoDB" id="10081at10239"/>
<dbReference type="EvolutionaryTrace" id="P03696"/>
<dbReference type="Proteomes" id="UP000000840">
    <property type="component" value="Genome"/>
</dbReference>
<dbReference type="GO" id="GO:0003697">
    <property type="term" value="F:single-stranded DNA binding"/>
    <property type="evidence" value="ECO:0007669"/>
    <property type="project" value="UniProtKB-UniRule"/>
</dbReference>
<dbReference type="GO" id="GO:0006310">
    <property type="term" value="P:DNA recombination"/>
    <property type="evidence" value="ECO:0007669"/>
    <property type="project" value="UniProtKB-UniRule"/>
</dbReference>
<dbReference type="GO" id="GO:0006281">
    <property type="term" value="P:DNA repair"/>
    <property type="evidence" value="ECO:0007669"/>
    <property type="project" value="UniProtKB-UniRule"/>
</dbReference>
<dbReference type="GO" id="GO:0006260">
    <property type="term" value="P:DNA replication"/>
    <property type="evidence" value="ECO:0007669"/>
    <property type="project" value="UniProtKB-KW"/>
</dbReference>
<dbReference type="GO" id="GO:0039693">
    <property type="term" value="P:viral DNA genome replication"/>
    <property type="evidence" value="ECO:0007669"/>
    <property type="project" value="UniProtKB-UniRule"/>
</dbReference>
<dbReference type="Gene3D" id="2.40.50.140">
    <property type="entry name" value="Nucleic acid-binding proteins"/>
    <property type="match status" value="1"/>
</dbReference>
<dbReference type="HAMAP" id="MF_04153">
    <property type="entry name" value="SSB_T7"/>
    <property type="match status" value="1"/>
</dbReference>
<dbReference type="InterPro" id="IPR012340">
    <property type="entry name" value="NA-bd_OB-fold"/>
</dbReference>
<dbReference type="InterPro" id="IPR049476">
    <property type="entry name" value="SBB_BPT7"/>
</dbReference>
<dbReference type="InterPro" id="IPR016411">
    <property type="entry name" value="SSB_T7"/>
</dbReference>
<dbReference type="Pfam" id="PF21265">
    <property type="entry name" value="SBB_T7"/>
    <property type="match status" value="1"/>
</dbReference>
<dbReference type="PIRSF" id="PIRSF004311">
    <property type="entry name" value="Helix_destablz_SSB_T7"/>
    <property type="match status" value="1"/>
</dbReference>
<dbReference type="SUPFAM" id="SSF50249">
    <property type="entry name" value="Nucleic acid-binding proteins"/>
    <property type="match status" value="1"/>
</dbReference>
<gene>
    <name type="ordered locus">2.5</name>
</gene>
<keyword id="KW-0002">3D-structure</keyword>
<keyword id="KW-0227">DNA damage</keyword>
<keyword id="KW-0234">DNA repair</keyword>
<keyword id="KW-0235">DNA replication</keyword>
<keyword id="KW-0238">DNA-binding</keyword>
<keyword id="KW-1185">Reference proteome</keyword>
<keyword id="KW-1194">Viral DNA replication</keyword>
<feature type="chain" id="PRO_0000106483" description="Single-stranded DNA-binding protein">
    <location>
        <begin position="1"/>
        <end position="232"/>
    </location>
</feature>
<feature type="region of interest" description="Disordered" evidence="2">
    <location>
        <begin position="189"/>
        <end position="232"/>
    </location>
</feature>
<feature type="region of interest" description="Dimerization and interaction with the viral DNA polymerase and helicase" evidence="1 11">
    <location>
        <begin position="212"/>
        <end position="232"/>
    </location>
</feature>
<feature type="compositionally biased region" description="Acidic residues" evidence="2">
    <location>
        <begin position="214"/>
        <end position="232"/>
    </location>
</feature>
<feature type="mutagenesis site" description="Binds 3-fold more tightly to ssDNA. Promotes strand-displacement DNA synthesis by viral DNA polymerase in the absence of the helicase." evidence="5 8">
    <original>F</original>
    <variation>L</variation>
    <location>
        <position position="232"/>
    </location>
</feature>
<feature type="strand" evidence="15">
    <location>
        <begin position="10"/>
        <end position="13"/>
    </location>
</feature>
<feature type="strand" evidence="15">
    <location>
        <begin position="18"/>
        <end position="23"/>
    </location>
</feature>
<feature type="strand" evidence="15">
    <location>
        <begin position="37"/>
        <end position="45"/>
    </location>
</feature>
<feature type="helix" evidence="15">
    <location>
        <begin position="49"/>
        <end position="74"/>
    </location>
</feature>
<feature type="strand" evidence="15">
    <location>
        <begin position="95"/>
        <end position="98"/>
    </location>
</feature>
<feature type="strand" evidence="15">
    <location>
        <begin position="100"/>
        <end position="115"/>
    </location>
</feature>
<feature type="turn" evidence="15">
    <location>
        <begin position="117"/>
        <end position="119"/>
    </location>
</feature>
<feature type="strand" evidence="15">
    <location>
        <begin position="122"/>
        <end position="124"/>
    </location>
</feature>
<feature type="strand" evidence="15">
    <location>
        <begin position="148"/>
        <end position="158"/>
    </location>
</feature>
<feature type="strand" evidence="15">
    <location>
        <begin position="166"/>
        <end position="179"/>
    </location>
</feature>
<feature type="helix" evidence="15">
    <location>
        <begin position="191"/>
        <end position="193"/>
    </location>
</feature>
<proteinExistence type="evidence at protein level"/>
<reference key="1">
    <citation type="journal article" date="1983" name="J. Mol. Biol.">
        <title>Complete nucleotide sequence of bacteriophage T7 DNA and the locations of T7 genetic elements.</title>
        <authorList>
            <person name="Dunn J.J."/>
            <person name="Studier F.W."/>
        </authorList>
    </citation>
    <scope>NUCLEOTIDE SEQUENCE [LARGE SCALE GENOMIC DNA]</scope>
</reference>
<reference key="2">
    <citation type="journal article" date="1981" name="J. Mol. Biol.">
        <title>Nucleotide sequence from the genetic left end of bacteriophage T7 DNA to the beginning of gene 4.</title>
        <authorList>
            <person name="Dunn J.J."/>
            <person name="Studier F.W."/>
        </authorList>
    </citation>
    <scope>NUCLEOTIDE SEQUENCE [GENOMIC DNA]</scope>
</reference>
<reference key="3">
    <citation type="journal article" date="1992" name="J. Biol. Chem.">
        <title>Purification and characterization of the bacteriophage T7 gene 2.5 protein. A single-stranded DNA-binding protein.</title>
        <authorList>
            <person name="Kim Y.T."/>
            <person name="Tabor S."/>
            <person name="Bortner C."/>
            <person name="Grifith J.D."/>
            <person name="Richardson C.C."/>
        </authorList>
    </citation>
    <scope>FUNCTION</scope>
    <scope>SUBUNIT</scope>
    <scope>MUTAGENESIS OF PHE-232</scope>
</reference>
<reference key="4">
    <citation type="journal article" date="1992" name="J. Biol. Chem.">
        <title>Interactions of gene 2.5 protein and DNA polymerase of bacteriophage T7.</title>
        <authorList>
            <person name="Kim Y.T."/>
            <person name="Tabor S."/>
            <person name="Churchich J.E."/>
            <person name="Richardson C.C."/>
        </authorList>
    </citation>
    <scope>INTERACTION WITH THE VIRAL HELICASE AND DNA POLYMERASE</scope>
</reference>
<reference key="5">
    <citation type="journal article" date="1994" name="J. Biol. Chem.">
        <title>Acidic carboxyl-terminal domain of gene 2.5 protein of bacteriophage T7 is essential for protein-protein interactions.</title>
        <authorList>
            <person name="Kim Y.T."/>
            <person name="Richardson C.C."/>
        </authorList>
    </citation>
    <scope>INTERACTION WITH THE VIRAL DNA POLYMERASE</scope>
    <scope>DOMAIN</scope>
</reference>
<reference key="6">
    <citation type="journal article" date="1996" name="EMBO J.">
        <title>Single-stranded DNA binding protein and DNA helicase of bacteriophage T7 mediate homologous DNA strand exchange.</title>
        <authorList>
            <person name="Kong D."/>
            <person name="Richardson C.C."/>
        </authorList>
    </citation>
    <scope>FUNCTION</scope>
</reference>
<reference key="7">
    <citation type="journal article" date="1997" name="J. Biol. Chem.">
        <title>Role of the bacteriophage T7 and T4 single-stranded DNA-binding proteins in the formation of joint molecules and DNA helicase-catalyzed polar branch migration.</title>
        <authorList>
            <person name="Kong D."/>
            <person name="Nossal N.G."/>
            <person name="Richardson C.C."/>
        </authorList>
    </citation>
    <scope>FUNCTION</scope>
</reference>
<reference key="8">
    <citation type="journal article" date="1998" name="Mol. Cell">
        <title>Coordinated leading and lagging strand DNA synthesis on a minicircular template.</title>
        <authorList>
            <person name="Lee J."/>
            <person name="Chastain P.D. II"/>
            <person name="Kusakabe T."/>
            <person name="Griffith J.D."/>
            <person name="Richardson C.C."/>
        </authorList>
    </citation>
    <scope>FUNCTION</scope>
</reference>
<reference key="9">
    <citation type="journal article" date="2001" name="J. Bacteriol.">
        <title>T7 single strand DNA binding protein but not T7 helicase is required for DNA double strand break repair.</title>
        <authorList>
            <person name="Yu M."/>
            <person name="Masker W."/>
        </authorList>
    </citation>
    <scope>FUNCTION</scope>
</reference>
<reference key="10">
    <citation type="journal article" date="2003" name="J. Biol. Chem.">
        <title>The carboxyl-terminal domain of bacteriophage T7 single-stranded DNA-binding protein modulates DNA binding and interaction with T7 DNA polymerase.</title>
        <authorList>
            <person name="He Z.G."/>
            <person name="Rezende L.F."/>
            <person name="Willcox S."/>
            <person name="Griffith J.D."/>
            <person name="Richardson C.C."/>
        </authorList>
    </citation>
    <scope>DOMAIN</scope>
    <scope>MUTAGENESIS OF PHE-232</scope>
    <scope>INTERACTION WITH THE VIRAL DNA POLYMERASE</scope>
</reference>
<reference key="11">
    <citation type="journal article" date="2005" name="Proc. Natl. Acad. Sci. U.S.A.">
        <title>A unique loop in T7 DNA polymerase mediates the binding of helicase-primase, DNA binding protein, and processivity factor.</title>
        <authorList>
            <person name="Hamdan S.M."/>
            <person name="Marintcheva B."/>
            <person name="Cook T."/>
            <person name="Lee S.J."/>
            <person name="Tabor S."/>
            <person name="Richardson C.C."/>
        </authorList>
    </citation>
    <scope>INTERACTION WITH THE VIRAL DNA POLYMERASE</scope>
</reference>
<reference key="12">
    <citation type="journal article" date="2006" name="J. Biol. Chem.">
        <title>Essential residues in the C terminus of the bacteriophage T7 gene 2.5 single-stranded DNA-binding protein.</title>
        <authorList>
            <person name="Marintcheva B."/>
            <person name="Hamdan S.M."/>
            <person name="Lee S.J."/>
            <person name="Richardson C.C."/>
        </authorList>
    </citation>
    <scope>FUNCTION</scope>
    <scope>DOMAIN</scope>
</reference>
<reference key="13">
    <citation type="journal article" date="2012" name="J. Biol. Chem.">
        <title>An interaction between DNA polymerase and helicase is essential for the high processivity of the bacteriophage T7 replisome.</title>
        <authorList>
            <person name="Kulczyk A.W."/>
            <person name="Akabayov B."/>
            <person name="Lee S.J."/>
            <person name="Bostina M."/>
            <person name="Berkowitz S.A."/>
            <person name="Richardson C.C."/>
        </authorList>
    </citation>
    <scope>IDENTIFICATION IN THE REPLICASE COMPLEX</scope>
</reference>
<reference key="14">
    <citation type="journal article" date="2019" name="Semin. Cell Dev. Biol.">
        <title>Gp2.5, the multifunctional bacteriophage T7 single-stranded DNA binding protein.</title>
        <authorList>
            <person name="Hernandez A.J."/>
            <person name="Richardson C.C."/>
        </authorList>
    </citation>
    <scope>REVIEW</scope>
</reference>
<reference key="15">
    <citation type="journal article" date="2001" name="Proc. Natl. Acad. Sci. U.S.A.">
        <title>Structure of the gene 2.5 protein, a single-stranded DNA binding protein encoded by bacteriophage T7.</title>
        <authorList>
            <person name="Hollis T."/>
            <person name="Stattel J.M."/>
            <person name="Walther D.S."/>
            <person name="Richardson C.C."/>
            <person name="Ellenberger T."/>
        </authorList>
    </citation>
    <scope>X-RAY CRYSTALLOGRAPHY (1.9 ANGSTROMS) OF 1-206</scope>
    <scope>SUBUNIT</scope>
</reference>
<accession>P03696</accession>
<name>SSB_BPT7</name>
<sequence length="232" mass="25694">MAKKIFTSALGTAEPYAYIAKPDYGNEERGFGNPRGVYKVDLTIPNKDPRCQRMVDEIVKCHEEAYAAAVEEYEANPPAVARGKKPLKPYEGDMPFFDNGDGTTTFKFKCYASFQDKKTKETKHINLVVVDSKGKKMEDVPIIGGGSKLKVKYSLVPYKWNTAVGASVKLQLESVMLVELATFGGGEDDWADEVEENGYVASGSAKASKPRDEESWDEDDEESEEADEDGDF</sequence>